<organism>
    <name type="scientific">Streptococcus pneumoniae (strain Taiwan19F-14)</name>
    <dbReference type="NCBI Taxonomy" id="487213"/>
    <lineage>
        <taxon>Bacteria</taxon>
        <taxon>Bacillati</taxon>
        <taxon>Bacillota</taxon>
        <taxon>Bacilli</taxon>
        <taxon>Lactobacillales</taxon>
        <taxon>Streptococcaceae</taxon>
        <taxon>Streptococcus</taxon>
    </lineage>
</organism>
<protein>
    <recommendedName>
        <fullName evidence="1">DNA mismatch repair protein MutL</fullName>
    </recommendedName>
</protein>
<name>MUTL_STRZT</name>
<keyword id="KW-0227">DNA damage</keyword>
<keyword id="KW-0234">DNA repair</keyword>
<evidence type="ECO:0000255" key="1">
    <source>
        <dbReference type="HAMAP-Rule" id="MF_00149"/>
    </source>
</evidence>
<reference key="1">
    <citation type="journal article" date="2010" name="Genome Biol.">
        <title>Structure and dynamics of the pan-genome of Streptococcus pneumoniae and closely related species.</title>
        <authorList>
            <person name="Donati C."/>
            <person name="Hiller N.L."/>
            <person name="Tettelin H."/>
            <person name="Muzzi A."/>
            <person name="Croucher N.J."/>
            <person name="Angiuoli S.V."/>
            <person name="Oggioni M."/>
            <person name="Dunning Hotopp J.C."/>
            <person name="Hu F.Z."/>
            <person name="Riley D.R."/>
            <person name="Covacci A."/>
            <person name="Mitchell T.J."/>
            <person name="Bentley S.D."/>
            <person name="Kilian M."/>
            <person name="Ehrlich G.D."/>
            <person name="Rappuoli R."/>
            <person name="Moxon E.R."/>
            <person name="Masignani V."/>
        </authorList>
    </citation>
    <scope>NUCLEOTIDE SEQUENCE [LARGE SCALE GENOMIC DNA]</scope>
    <source>
        <strain>Taiwan19F-14</strain>
    </source>
</reference>
<feature type="chain" id="PRO_1000192185" description="DNA mismatch repair protein MutL">
    <location>
        <begin position="1"/>
        <end position="649"/>
    </location>
</feature>
<sequence length="649" mass="73421">MSHIIELPEMLANQIAAGEVIERPASVVKELVENAIDAGSSQIIIEIEEAGLKKVQITDNGHGIAHDEVELALRRHATSKIKNQADLFRIRTLGFRGEALPSIASVSVLTLLTAVDGASHGTKLVARGGEVEEVIPATSPVGTKVCVEDLFFNTPARLKYMKSQQAELSHIIDIVNRLGLAHPEISFSLISDGKEMTRTAGTGQLRQAIAGIYGLVSAKKMIEIENSDLDFEISGFVSLPELTRANRNYISLFINGRYIKNFLLNRAILDGFGSKLMVGRFPLAVIHIHIDPYLADVNVHPTKQEVRISKEKELMTLVSEAIANSLKEQTLIPDALENLAKSTVRNREKVDQTILPLKENTLYYEKTEPSRPSQTEVADYQVELTDEGQDLTLFAKETLDRLTKPAKLHFAERKPANYDQLDHPELDLASIDKAYDKLEREEASSFPELEFFGQMHGTYLFAQGRDGLYIIDQHAAQERVKYEEYRESIGNVDQSQQQLLVPYIFEFPADDALRLKERMPLLEEVGVFLAEYGENQFILREHPIWMAEEEIESGIYEMCDMLLLTKEVSIKKYRAELAIMMSCKRSIKANHRIDDHSARQLLYQLSQCDNPYNCPHGRPVLVHFTKSDMEKMFRRIQENHTSLRELGKY</sequence>
<comment type="function">
    <text evidence="1">This protein is involved in the repair of mismatches in DNA. It is required for dam-dependent methyl-directed DNA mismatch repair. May act as a 'molecular matchmaker', a protein that promotes the formation of a stable complex between two or more DNA-binding proteins in an ATP-dependent manner without itself being part of a final effector complex.</text>
</comment>
<comment type="similarity">
    <text evidence="1">Belongs to the DNA mismatch repair MutL/HexB family.</text>
</comment>
<gene>
    <name evidence="1" type="primary">mutL</name>
    <name type="ordered locus">SPT_0211</name>
</gene>
<accession>C1CP43</accession>
<proteinExistence type="inferred from homology"/>
<dbReference type="EMBL" id="CP000921">
    <property type="protein sequence ID" value="ACO23547.1"/>
    <property type="molecule type" value="Genomic_DNA"/>
</dbReference>
<dbReference type="RefSeq" id="WP_000018164.1">
    <property type="nucleotide sequence ID" value="NC_012469.1"/>
</dbReference>
<dbReference type="SMR" id="C1CP43"/>
<dbReference type="GeneID" id="45652337"/>
<dbReference type="KEGG" id="snt:SPT_0211"/>
<dbReference type="HOGENOM" id="CLU_004131_4_1_9"/>
<dbReference type="GO" id="GO:0032300">
    <property type="term" value="C:mismatch repair complex"/>
    <property type="evidence" value="ECO:0007669"/>
    <property type="project" value="InterPro"/>
</dbReference>
<dbReference type="GO" id="GO:0005524">
    <property type="term" value="F:ATP binding"/>
    <property type="evidence" value="ECO:0007669"/>
    <property type="project" value="InterPro"/>
</dbReference>
<dbReference type="GO" id="GO:0016887">
    <property type="term" value="F:ATP hydrolysis activity"/>
    <property type="evidence" value="ECO:0007669"/>
    <property type="project" value="InterPro"/>
</dbReference>
<dbReference type="GO" id="GO:0140664">
    <property type="term" value="F:ATP-dependent DNA damage sensor activity"/>
    <property type="evidence" value="ECO:0007669"/>
    <property type="project" value="InterPro"/>
</dbReference>
<dbReference type="GO" id="GO:0030983">
    <property type="term" value="F:mismatched DNA binding"/>
    <property type="evidence" value="ECO:0007669"/>
    <property type="project" value="InterPro"/>
</dbReference>
<dbReference type="GO" id="GO:0006298">
    <property type="term" value="P:mismatch repair"/>
    <property type="evidence" value="ECO:0007669"/>
    <property type="project" value="UniProtKB-UniRule"/>
</dbReference>
<dbReference type="CDD" id="cd16926">
    <property type="entry name" value="HATPase_MutL-MLH-PMS-like"/>
    <property type="match status" value="1"/>
</dbReference>
<dbReference type="CDD" id="cd00782">
    <property type="entry name" value="MutL_Trans"/>
    <property type="match status" value="1"/>
</dbReference>
<dbReference type="FunFam" id="3.30.1370.100:FF:000004">
    <property type="entry name" value="DNA mismatch repair endonuclease MutL"/>
    <property type="match status" value="1"/>
</dbReference>
<dbReference type="FunFam" id="3.30.230.10:FF:000036">
    <property type="entry name" value="DNA mismatch repair endonuclease MutL"/>
    <property type="match status" value="1"/>
</dbReference>
<dbReference type="FunFam" id="3.30.565.10:FF:000003">
    <property type="entry name" value="DNA mismatch repair endonuclease MutL"/>
    <property type="match status" value="1"/>
</dbReference>
<dbReference type="Gene3D" id="3.30.230.10">
    <property type="match status" value="1"/>
</dbReference>
<dbReference type="Gene3D" id="3.30.565.10">
    <property type="entry name" value="Histidine kinase-like ATPase, C-terminal domain"/>
    <property type="match status" value="1"/>
</dbReference>
<dbReference type="Gene3D" id="3.30.1540.20">
    <property type="entry name" value="MutL, C-terminal domain, dimerisation subdomain"/>
    <property type="match status" value="1"/>
</dbReference>
<dbReference type="Gene3D" id="3.30.1370.100">
    <property type="entry name" value="MutL, C-terminal domain, regulatory subdomain"/>
    <property type="match status" value="1"/>
</dbReference>
<dbReference type="HAMAP" id="MF_00149">
    <property type="entry name" value="DNA_mis_repair"/>
    <property type="match status" value="1"/>
</dbReference>
<dbReference type="InterPro" id="IPR014762">
    <property type="entry name" value="DNA_mismatch_repair_CS"/>
</dbReference>
<dbReference type="InterPro" id="IPR020667">
    <property type="entry name" value="DNA_mismatch_repair_MutL"/>
</dbReference>
<dbReference type="InterPro" id="IPR013507">
    <property type="entry name" value="DNA_mismatch_S5_2-like"/>
</dbReference>
<dbReference type="InterPro" id="IPR036890">
    <property type="entry name" value="HATPase_C_sf"/>
</dbReference>
<dbReference type="InterPro" id="IPR002099">
    <property type="entry name" value="MutL/Mlh/PMS"/>
</dbReference>
<dbReference type="InterPro" id="IPR038973">
    <property type="entry name" value="MutL/Mlh/Pms-like"/>
</dbReference>
<dbReference type="InterPro" id="IPR014790">
    <property type="entry name" value="MutL_C"/>
</dbReference>
<dbReference type="InterPro" id="IPR042120">
    <property type="entry name" value="MutL_C_dimsub"/>
</dbReference>
<dbReference type="InterPro" id="IPR042121">
    <property type="entry name" value="MutL_C_regsub"/>
</dbReference>
<dbReference type="InterPro" id="IPR037198">
    <property type="entry name" value="MutL_C_sf"/>
</dbReference>
<dbReference type="InterPro" id="IPR020568">
    <property type="entry name" value="Ribosomal_Su5_D2-typ_SF"/>
</dbReference>
<dbReference type="InterPro" id="IPR014721">
    <property type="entry name" value="Ribsml_uS5_D2-typ_fold_subgr"/>
</dbReference>
<dbReference type="NCBIfam" id="TIGR00585">
    <property type="entry name" value="mutl"/>
    <property type="match status" value="1"/>
</dbReference>
<dbReference type="NCBIfam" id="NF000950">
    <property type="entry name" value="PRK00095.1-3"/>
    <property type="match status" value="1"/>
</dbReference>
<dbReference type="PANTHER" id="PTHR10073">
    <property type="entry name" value="DNA MISMATCH REPAIR PROTEIN MLH, PMS, MUTL"/>
    <property type="match status" value="1"/>
</dbReference>
<dbReference type="PANTHER" id="PTHR10073:SF12">
    <property type="entry name" value="DNA MISMATCH REPAIR PROTEIN MLH1"/>
    <property type="match status" value="1"/>
</dbReference>
<dbReference type="Pfam" id="PF01119">
    <property type="entry name" value="DNA_mis_repair"/>
    <property type="match status" value="1"/>
</dbReference>
<dbReference type="Pfam" id="PF13589">
    <property type="entry name" value="HATPase_c_3"/>
    <property type="match status" value="1"/>
</dbReference>
<dbReference type="Pfam" id="PF08676">
    <property type="entry name" value="MutL_C"/>
    <property type="match status" value="1"/>
</dbReference>
<dbReference type="SMART" id="SM01340">
    <property type="entry name" value="DNA_mis_repair"/>
    <property type="match status" value="1"/>
</dbReference>
<dbReference type="SMART" id="SM00853">
    <property type="entry name" value="MutL_C"/>
    <property type="match status" value="1"/>
</dbReference>
<dbReference type="SUPFAM" id="SSF55874">
    <property type="entry name" value="ATPase domain of HSP90 chaperone/DNA topoisomerase II/histidine kinase"/>
    <property type="match status" value="1"/>
</dbReference>
<dbReference type="SUPFAM" id="SSF118116">
    <property type="entry name" value="DNA mismatch repair protein MutL"/>
    <property type="match status" value="1"/>
</dbReference>
<dbReference type="SUPFAM" id="SSF54211">
    <property type="entry name" value="Ribosomal protein S5 domain 2-like"/>
    <property type="match status" value="1"/>
</dbReference>
<dbReference type="PROSITE" id="PS00058">
    <property type="entry name" value="DNA_MISMATCH_REPAIR_1"/>
    <property type="match status" value="1"/>
</dbReference>